<gene>
    <name type="primary">RAP2-13</name>
    <name type="synonym">ERF058</name>
    <name type="ordered locus">At1g22190</name>
    <name type="ORF">F16L1.8</name>
</gene>
<keyword id="KW-0010">Activator</keyword>
<keyword id="KW-0238">DNA-binding</keyword>
<keyword id="KW-0936">Ethylene signaling pathway</keyword>
<keyword id="KW-0539">Nucleus</keyword>
<keyword id="KW-1185">Reference proteome</keyword>
<keyword id="KW-0804">Transcription</keyword>
<keyword id="KW-0805">Transcription regulation</keyword>
<organism>
    <name type="scientific">Arabidopsis thaliana</name>
    <name type="common">Mouse-ear cress</name>
    <dbReference type="NCBI Taxonomy" id="3702"/>
    <lineage>
        <taxon>Eukaryota</taxon>
        <taxon>Viridiplantae</taxon>
        <taxon>Streptophyta</taxon>
        <taxon>Embryophyta</taxon>
        <taxon>Tracheophyta</taxon>
        <taxon>Spermatophyta</taxon>
        <taxon>Magnoliopsida</taxon>
        <taxon>eudicotyledons</taxon>
        <taxon>Gunneridae</taxon>
        <taxon>Pentapetalae</taxon>
        <taxon>rosids</taxon>
        <taxon>malvids</taxon>
        <taxon>Brassicales</taxon>
        <taxon>Brassicaceae</taxon>
        <taxon>Camelineae</taxon>
        <taxon>Arabidopsis</taxon>
    </lineage>
</organism>
<proteinExistence type="evidence at protein level"/>
<protein>
    <recommendedName>
        <fullName>Ethylene-responsive transcription factor RAP2-13</fullName>
    </recommendedName>
    <alternativeName>
        <fullName>Ethylene-responsive transcription factor ERF058</fullName>
    </alternativeName>
    <alternativeName>
        <fullName>Protein RELATED TO APETALA2 13</fullName>
    </alternativeName>
</protein>
<accession>Q9LM15</accession>
<dbReference type="EMBL" id="AC073942">
    <property type="protein sequence ID" value="AAF87854.1"/>
    <property type="molecule type" value="Genomic_DNA"/>
</dbReference>
<dbReference type="EMBL" id="CP002684">
    <property type="protein sequence ID" value="AEE30209.1"/>
    <property type="molecule type" value="Genomic_DNA"/>
</dbReference>
<dbReference type="EMBL" id="BT000907">
    <property type="protein sequence ID" value="AAN41307.1"/>
    <property type="molecule type" value="mRNA"/>
</dbReference>
<dbReference type="PIR" id="E86354">
    <property type="entry name" value="E86354"/>
</dbReference>
<dbReference type="RefSeq" id="NP_173638.1">
    <property type="nucleotide sequence ID" value="NM_102069.3"/>
</dbReference>
<dbReference type="SMR" id="Q9LM15"/>
<dbReference type="BioGRID" id="24063">
    <property type="interactions" value="19"/>
</dbReference>
<dbReference type="FunCoup" id="Q9LM15">
    <property type="interactions" value="5"/>
</dbReference>
<dbReference type="IntAct" id="Q9LM15">
    <property type="interactions" value="5"/>
</dbReference>
<dbReference type="MINT" id="Q9LM15"/>
<dbReference type="STRING" id="3702.Q9LM15"/>
<dbReference type="PaxDb" id="3702-AT1G22190.1"/>
<dbReference type="EnsemblPlants" id="AT1G22190.1">
    <property type="protein sequence ID" value="AT1G22190.1"/>
    <property type="gene ID" value="AT1G22190"/>
</dbReference>
<dbReference type="GeneID" id="838824"/>
<dbReference type="Gramene" id="AT1G22190.1">
    <property type="protein sequence ID" value="AT1G22190.1"/>
    <property type="gene ID" value="AT1G22190"/>
</dbReference>
<dbReference type="KEGG" id="ath:AT1G22190"/>
<dbReference type="Araport" id="AT1G22190"/>
<dbReference type="TAIR" id="AT1G22190">
    <property type="gene designation" value="RAP2.4"/>
</dbReference>
<dbReference type="eggNOG" id="ENOG502QQEY">
    <property type="taxonomic scope" value="Eukaryota"/>
</dbReference>
<dbReference type="HOGENOM" id="CLU_057028_1_0_1"/>
<dbReference type="InParanoid" id="Q9LM15"/>
<dbReference type="OMA" id="TMDYYNS"/>
<dbReference type="OrthoDB" id="663856at2759"/>
<dbReference type="PhylomeDB" id="Q9LM15"/>
<dbReference type="PRO" id="PR:Q9LM15"/>
<dbReference type="Proteomes" id="UP000006548">
    <property type="component" value="Chromosome 1"/>
</dbReference>
<dbReference type="ExpressionAtlas" id="Q9LM15">
    <property type="expression patterns" value="baseline and differential"/>
</dbReference>
<dbReference type="GO" id="GO:0005634">
    <property type="term" value="C:nucleus"/>
    <property type="evidence" value="ECO:0007669"/>
    <property type="project" value="UniProtKB-SubCell"/>
</dbReference>
<dbReference type="GO" id="GO:0003700">
    <property type="term" value="F:DNA-binding transcription factor activity"/>
    <property type="evidence" value="ECO:0000250"/>
    <property type="project" value="TAIR"/>
</dbReference>
<dbReference type="GO" id="GO:0043565">
    <property type="term" value="F:sequence-specific DNA binding"/>
    <property type="evidence" value="ECO:0000314"/>
    <property type="project" value="TAIR"/>
</dbReference>
<dbReference type="GO" id="GO:0000976">
    <property type="term" value="F:transcription cis-regulatory region binding"/>
    <property type="evidence" value="ECO:0000353"/>
    <property type="project" value="TAIR"/>
</dbReference>
<dbReference type="GO" id="GO:0009873">
    <property type="term" value="P:ethylene-activated signaling pathway"/>
    <property type="evidence" value="ECO:0007669"/>
    <property type="project" value="UniProtKB-KW"/>
</dbReference>
<dbReference type="GO" id="GO:0009409">
    <property type="term" value="P:response to cold"/>
    <property type="evidence" value="ECO:0000270"/>
    <property type="project" value="TAIR"/>
</dbReference>
<dbReference type="GO" id="GO:0009620">
    <property type="term" value="P:response to fungus"/>
    <property type="evidence" value="ECO:0000270"/>
    <property type="project" value="TAIR"/>
</dbReference>
<dbReference type="GO" id="GO:0006970">
    <property type="term" value="P:response to osmotic stress"/>
    <property type="evidence" value="ECO:0000270"/>
    <property type="project" value="TAIR"/>
</dbReference>
<dbReference type="GO" id="GO:0009414">
    <property type="term" value="P:response to water deprivation"/>
    <property type="evidence" value="ECO:0000270"/>
    <property type="project" value="TAIR"/>
</dbReference>
<dbReference type="CDD" id="cd00018">
    <property type="entry name" value="AP2"/>
    <property type="match status" value="1"/>
</dbReference>
<dbReference type="FunFam" id="3.30.730.10:FF:000001">
    <property type="entry name" value="Ethylene-responsive transcription factor 2"/>
    <property type="match status" value="1"/>
</dbReference>
<dbReference type="Gene3D" id="3.30.730.10">
    <property type="entry name" value="AP2/ERF domain"/>
    <property type="match status" value="1"/>
</dbReference>
<dbReference type="InterPro" id="IPR001471">
    <property type="entry name" value="AP2/ERF_dom"/>
</dbReference>
<dbReference type="InterPro" id="IPR036955">
    <property type="entry name" value="AP2/ERF_dom_sf"/>
</dbReference>
<dbReference type="InterPro" id="IPR016177">
    <property type="entry name" value="DNA-bd_dom_sf"/>
</dbReference>
<dbReference type="InterPro" id="IPR051758">
    <property type="entry name" value="ERF/AP2-like"/>
</dbReference>
<dbReference type="PANTHER" id="PTHR31657">
    <property type="entry name" value="ETHYLENE-RESPONSIVE TRANSCRIPTION FACTOR ERF061"/>
    <property type="match status" value="1"/>
</dbReference>
<dbReference type="PANTHER" id="PTHR31657:SF87">
    <property type="entry name" value="ETHYLENE-RESPONSIVE TRANSCRIPTION FACTOR RAP2-13"/>
    <property type="match status" value="1"/>
</dbReference>
<dbReference type="Pfam" id="PF00847">
    <property type="entry name" value="AP2"/>
    <property type="match status" value="1"/>
</dbReference>
<dbReference type="PRINTS" id="PR00367">
    <property type="entry name" value="ETHRSPELEMNT"/>
</dbReference>
<dbReference type="SMART" id="SM00380">
    <property type="entry name" value="AP2"/>
    <property type="match status" value="1"/>
</dbReference>
<dbReference type="SUPFAM" id="SSF54171">
    <property type="entry name" value="DNA-binding domain"/>
    <property type="match status" value="1"/>
</dbReference>
<dbReference type="PROSITE" id="PS51032">
    <property type="entry name" value="AP2_ERF"/>
    <property type="match status" value="1"/>
</dbReference>
<evidence type="ECO:0000250" key="1"/>
<evidence type="ECO:0000255" key="2">
    <source>
        <dbReference type="PROSITE-ProRule" id="PRU00366"/>
    </source>
</evidence>
<evidence type="ECO:0000256" key="3">
    <source>
        <dbReference type="SAM" id="MobiDB-lite"/>
    </source>
</evidence>
<evidence type="ECO:0000269" key="4">
    <source>
    </source>
</evidence>
<evidence type="ECO:0000305" key="5"/>
<comment type="function">
    <text evidence="1">Probably acts as a transcriptional activator. Binds to the GCC-box pathogenesis-related promoter element. May be involved in the regulation of gene expression by stress factors and by components of stress signal transduction pathways (By similarity).</text>
</comment>
<comment type="subunit">
    <text evidence="4">Interacts with BTB/POZ-MATH proteins BPM1 and BPM3.</text>
</comment>
<comment type="interaction">
    <interactant intactId="EBI-7528397">
        <id>Q9LM15</id>
    </interactant>
    <interactant intactId="EBI-540891">
        <id>Q8L765</id>
        <label>BPM1</label>
    </interactant>
    <organismsDiffer>false</organismsDiffer>
    <experiments>2</experiments>
</comment>
<comment type="subcellular location">
    <subcellularLocation>
        <location evidence="5">Nucleus</location>
    </subcellularLocation>
</comment>
<comment type="similarity">
    <text evidence="5">Belongs to the AP2/ERF transcription factor family. ERF subfamily.</text>
</comment>
<feature type="chain" id="PRO_0000290397" description="Ethylene-responsive transcription factor RAP2-13">
    <location>
        <begin position="1"/>
        <end position="261"/>
    </location>
</feature>
<feature type="DNA-binding region" description="AP2/ERF" evidence="2">
    <location>
        <begin position="82"/>
        <end position="139"/>
    </location>
</feature>
<feature type="region of interest" description="Disordered" evidence="3">
    <location>
        <begin position="169"/>
        <end position="238"/>
    </location>
</feature>
<feature type="compositionally biased region" description="Basic residues" evidence="3">
    <location>
        <begin position="174"/>
        <end position="185"/>
    </location>
</feature>
<feature type="compositionally biased region" description="Low complexity" evidence="3">
    <location>
        <begin position="205"/>
        <end position="223"/>
    </location>
</feature>
<name>RA213_ARATH</name>
<sequence length="261" mass="29137">MTTSMDFYSNKTFQQSDPFGGELMEALLPFIKSPSNDSSAFAFSLPAPISYGSDLHSFSHHLSPKPVSMKQTGTSAAKPTKLYRGVRQRHWGKWVAEIRLPRNRTRLWLGTFDTAEEAALAYDKAAYKLRGDFARLNFPDLRHNDEYQPLQSSVDAKLEAICQNLAETTQKQVRSTKKSSSRKRSSTVAVKLPEEDYSSAGSSPLLTESYGSGGSSSPLSELTFGDTEEEIQPPWNENALEKYPSYEIDWDSILQCSSLVN</sequence>
<reference key="1">
    <citation type="journal article" date="2000" name="Nature">
        <title>Sequence and analysis of chromosome 1 of the plant Arabidopsis thaliana.</title>
        <authorList>
            <person name="Theologis A."/>
            <person name="Ecker J.R."/>
            <person name="Palm C.J."/>
            <person name="Federspiel N.A."/>
            <person name="Kaul S."/>
            <person name="White O."/>
            <person name="Alonso J."/>
            <person name="Altafi H."/>
            <person name="Araujo R."/>
            <person name="Bowman C.L."/>
            <person name="Brooks S.Y."/>
            <person name="Buehler E."/>
            <person name="Chan A."/>
            <person name="Chao Q."/>
            <person name="Chen H."/>
            <person name="Cheuk R.F."/>
            <person name="Chin C.W."/>
            <person name="Chung M.K."/>
            <person name="Conn L."/>
            <person name="Conway A.B."/>
            <person name="Conway A.R."/>
            <person name="Creasy T.H."/>
            <person name="Dewar K."/>
            <person name="Dunn P."/>
            <person name="Etgu P."/>
            <person name="Feldblyum T.V."/>
            <person name="Feng J.-D."/>
            <person name="Fong B."/>
            <person name="Fujii C.Y."/>
            <person name="Gill J.E."/>
            <person name="Goldsmith A.D."/>
            <person name="Haas B."/>
            <person name="Hansen N.F."/>
            <person name="Hughes B."/>
            <person name="Huizar L."/>
            <person name="Hunter J.L."/>
            <person name="Jenkins J."/>
            <person name="Johnson-Hopson C."/>
            <person name="Khan S."/>
            <person name="Khaykin E."/>
            <person name="Kim C.J."/>
            <person name="Koo H.L."/>
            <person name="Kremenetskaia I."/>
            <person name="Kurtz D.B."/>
            <person name="Kwan A."/>
            <person name="Lam B."/>
            <person name="Langin-Hooper S."/>
            <person name="Lee A."/>
            <person name="Lee J.M."/>
            <person name="Lenz C.A."/>
            <person name="Li J.H."/>
            <person name="Li Y.-P."/>
            <person name="Lin X."/>
            <person name="Liu S.X."/>
            <person name="Liu Z.A."/>
            <person name="Luros J.S."/>
            <person name="Maiti R."/>
            <person name="Marziali A."/>
            <person name="Militscher J."/>
            <person name="Miranda M."/>
            <person name="Nguyen M."/>
            <person name="Nierman W.C."/>
            <person name="Osborne B.I."/>
            <person name="Pai G."/>
            <person name="Peterson J."/>
            <person name="Pham P.K."/>
            <person name="Rizzo M."/>
            <person name="Rooney T."/>
            <person name="Rowley D."/>
            <person name="Sakano H."/>
            <person name="Salzberg S.L."/>
            <person name="Schwartz J.R."/>
            <person name="Shinn P."/>
            <person name="Southwick A.M."/>
            <person name="Sun H."/>
            <person name="Tallon L.J."/>
            <person name="Tambunga G."/>
            <person name="Toriumi M.J."/>
            <person name="Town C.D."/>
            <person name="Utterback T."/>
            <person name="Van Aken S."/>
            <person name="Vaysberg M."/>
            <person name="Vysotskaia V.S."/>
            <person name="Walker M."/>
            <person name="Wu D."/>
            <person name="Yu G."/>
            <person name="Fraser C.M."/>
            <person name="Venter J.C."/>
            <person name="Davis R.W."/>
        </authorList>
    </citation>
    <scope>NUCLEOTIDE SEQUENCE [LARGE SCALE GENOMIC DNA]</scope>
    <source>
        <strain>cv. Columbia</strain>
    </source>
</reference>
<reference key="2">
    <citation type="journal article" date="2017" name="Plant J.">
        <title>Araport11: a complete reannotation of the Arabidopsis thaliana reference genome.</title>
        <authorList>
            <person name="Cheng C.Y."/>
            <person name="Krishnakumar V."/>
            <person name="Chan A.P."/>
            <person name="Thibaud-Nissen F."/>
            <person name="Schobel S."/>
            <person name="Town C.D."/>
        </authorList>
    </citation>
    <scope>GENOME REANNOTATION</scope>
    <source>
        <strain>cv. Columbia</strain>
    </source>
</reference>
<reference key="3">
    <citation type="journal article" date="2003" name="Science">
        <title>Empirical analysis of transcriptional activity in the Arabidopsis genome.</title>
        <authorList>
            <person name="Yamada K."/>
            <person name="Lim J."/>
            <person name="Dale J.M."/>
            <person name="Chen H."/>
            <person name="Shinn P."/>
            <person name="Palm C.J."/>
            <person name="Southwick A.M."/>
            <person name="Wu H.C."/>
            <person name="Kim C.J."/>
            <person name="Nguyen M."/>
            <person name="Pham P.K."/>
            <person name="Cheuk R.F."/>
            <person name="Karlin-Newmann G."/>
            <person name="Liu S.X."/>
            <person name="Lam B."/>
            <person name="Sakano H."/>
            <person name="Wu T."/>
            <person name="Yu G."/>
            <person name="Miranda M."/>
            <person name="Quach H.L."/>
            <person name="Tripp M."/>
            <person name="Chang C.H."/>
            <person name="Lee J.M."/>
            <person name="Toriumi M.J."/>
            <person name="Chan M.M."/>
            <person name="Tang C.C."/>
            <person name="Onodera C.S."/>
            <person name="Deng J.M."/>
            <person name="Akiyama K."/>
            <person name="Ansari Y."/>
            <person name="Arakawa T."/>
            <person name="Banh J."/>
            <person name="Banno F."/>
            <person name="Bowser L."/>
            <person name="Brooks S.Y."/>
            <person name="Carninci P."/>
            <person name="Chao Q."/>
            <person name="Choy N."/>
            <person name="Enju A."/>
            <person name="Goldsmith A.D."/>
            <person name="Gurjal M."/>
            <person name="Hansen N.F."/>
            <person name="Hayashizaki Y."/>
            <person name="Johnson-Hopson C."/>
            <person name="Hsuan V.W."/>
            <person name="Iida K."/>
            <person name="Karnes M."/>
            <person name="Khan S."/>
            <person name="Koesema E."/>
            <person name="Ishida J."/>
            <person name="Jiang P.X."/>
            <person name="Jones T."/>
            <person name="Kawai J."/>
            <person name="Kamiya A."/>
            <person name="Meyers C."/>
            <person name="Nakajima M."/>
            <person name="Narusaka M."/>
            <person name="Seki M."/>
            <person name="Sakurai T."/>
            <person name="Satou M."/>
            <person name="Tamse R."/>
            <person name="Vaysberg M."/>
            <person name="Wallender E.K."/>
            <person name="Wong C."/>
            <person name="Yamamura Y."/>
            <person name="Yuan S."/>
            <person name="Shinozaki K."/>
            <person name="Davis R.W."/>
            <person name="Theologis A."/>
            <person name="Ecker J.R."/>
        </authorList>
    </citation>
    <scope>NUCLEOTIDE SEQUENCE [LARGE SCALE MRNA]</scope>
    <source>
        <strain>cv. Columbia</strain>
    </source>
</reference>
<reference key="4">
    <citation type="journal article" date="2006" name="Plant Physiol.">
        <title>Genome-wide analysis of the ERF gene family in Arabidopsis and rice.</title>
        <authorList>
            <person name="Nakano T."/>
            <person name="Suzuki K."/>
            <person name="Fujimura T."/>
            <person name="Shinshi H."/>
        </authorList>
    </citation>
    <scope>GENE FAMILY</scope>
    <scope>NOMENCLATURE</scope>
</reference>
<reference key="5">
    <citation type="journal article" date="2009" name="FEBS J.">
        <title>Arabidopsis thaliana BTB/ POZ-MATH proteins interact with members of the ERF/AP2 transcription factor family.</title>
        <authorList>
            <person name="Weber H."/>
            <person name="Hellmann H."/>
        </authorList>
    </citation>
    <scope>INTERACTION WITH BPM1 AND BPM3</scope>
</reference>